<feature type="chain" id="PRO_0000160307" description="ATP-dependent Clp protease ATP-binding subunit ClpX">
    <location>
        <begin position="1"/>
        <end position="419"/>
    </location>
</feature>
<feature type="domain" description="ClpX-type ZB" evidence="2">
    <location>
        <begin position="1"/>
        <end position="54"/>
    </location>
</feature>
<feature type="binding site" evidence="2">
    <location>
        <position position="13"/>
    </location>
    <ligand>
        <name>Zn(2+)</name>
        <dbReference type="ChEBI" id="CHEBI:29105"/>
    </ligand>
</feature>
<feature type="binding site" evidence="2">
    <location>
        <position position="16"/>
    </location>
    <ligand>
        <name>Zn(2+)</name>
        <dbReference type="ChEBI" id="CHEBI:29105"/>
    </ligand>
</feature>
<feature type="binding site" evidence="2">
    <location>
        <position position="35"/>
    </location>
    <ligand>
        <name>Zn(2+)</name>
        <dbReference type="ChEBI" id="CHEBI:29105"/>
    </ligand>
</feature>
<feature type="binding site" evidence="2">
    <location>
        <position position="38"/>
    </location>
    <ligand>
        <name>Zn(2+)</name>
        <dbReference type="ChEBI" id="CHEBI:29105"/>
    </ligand>
</feature>
<feature type="binding site" evidence="1">
    <location>
        <begin position="117"/>
        <end position="124"/>
    </location>
    <ligand>
        <name>ATP</name>
        <dbReference type="ChEBI" id="CHEBI:30616"/>
    </ligand>
</feature>
<dbReference type="EMBL" id="AE016877">
    <property type="protein sequence ID" value="AAP11392.1"/>
    <property type="molecule type" value="Genomic_DNA"/>
</dbReference>
<dbReference type="RefSeq" id="NP_834191.1">
    <property type="nucleotide sequence ID" value="NC_004722.1"/>
</dbReference>
<dbReference type="RefSeq" id="WP_000472289.1">
    <property type="nucleotide sequence ID" value="NZ_CP138336.1"/>
</dbReference>
<dbReference type="SMR" id="Q817Q2"/>
<dbReference type="STRING" id="226900.BC_4479"/>
<dbReference type="GeneID" id="72451148"/>
<dbReference type="KEGG" id="bce:BC4479"/>
<dbReference type="PATRIC" id="fig|226900.8.peg.4632"/>
<dbReference type="HOGENOM" id="CLU_014218_8_2_9"/>
<dbReference type="OrthoDB" id="9804062at2"/>
<dbReference type="Proteomes" id="UP000001417">
    <property type="component" value="Chromosome"/>
</dbReference>
<dbReference type="GO" id="GO:0009376">
    <property type="term" value="C:HslUV protease complex"/>
    <property type="evidence" value="ECO:0000318"/>
    <property type="project" value="GO_Central"/>
</dbReference>
<dbReference type="GO" id="GO:0005524">
    <property type="term" value="F:ATP binding"/>
    <property type="evidence" value="ECO:0000318"/>
    <property type="project" value="GO_Central"/>
</dbReference>
<dbReference type="GO" id="GO:0016887">
    <property type="term" value="F:ATP hydrolysis activity"/>
    <property type="evidence" value="ECO:0000318"/>
    <property type="project" value="GO_Central"/>
</dbReference>
<dbReference type="GO" id="GO:0140662">
    <property type="term" value="F:ATP-dependent protein folding chaperone"/>
    <property type="evidence" value="ECO:0007669"/>
    <property type="project" value="InterPro"/>
</dbReference>
<dbReference type="GO" id="GO:0046983">
    <property type="term" value="F:protein dimerization activity"/>
    <property type="evidence" value="ECO:0007669"/>
    <property type="project" value="InterPro"/>
</dbReference>
<dbReference type="GO" id="GO:0051082">
    <property type="term" value="F:unfolded protein binding"/>
    <property type="evidence" value="ECO:0007669"/>
    <property type="project" value="UniProtKB-UniRule"/>
</dbReference>
<dbReference type="GO" id="GO:0008270">
    <property type="term" value="F:zinc ion binding"/>
    <property type="evidence" value="ECO:0007669"/>
    <property type="project" value="InterPro"/>
</dbReference>
<dbReference type="GO" id="GO:0051301">
    <property type="term" value="P:cell division"/>
    <property type="evidence" value="ECO:0000318"/>
    <property type="project" value="GO_Central"/>
</dbReference>
<dbReference type="GO" id="GO:0051603">
    <property type="term" value="P:proteolysis involved in protein catabolic process"/>
    <property type="evidence" value="ECO:0000318"/>
    <property type="project" value="GO_Central"/>
</dbReference>
<dbReference type="CDD" id="cd19497">
    <property type="entry name" value="RecA-like_ClpX"/>
    <property type="match status" value="1"/>
</dbReference>
<dbReference type="FunFam" id="1.10.8.60:FF:000002">
    <property type="entry name" value="ATP-dependent Clp protease ATP-binding subunit ClpX"/>
    <property type="match status" value="1"/>
</dbReference>
<dbReference type="FunFam" id="3.40.50.300:FF:000005">
    <property type="entry name" value="ATP-dependent Clp protease ATP-binding subunit ClpX"/>
    <property type="match status" value="1"/>
</dbReference>
<dbReference type="Gene3D" id="1.10.8.60">
    <property type="match status" value="1"/>
</dbReference>
<dbReference type="Gene3D" id="6.20.220.10">
    <property type="entry name" value="ClpX chaperone, C4-type zinc finger domain"/>
    <property type="match status" value="1"/>
</dbReference>
<dbReference type="Gene3D" id="3.40.50.300">
    <property type="entry name" value="P-loop containing nucleotide triphosphate hydrolases"/>
    <property type="match status" value="1"/>
</dbReference>
<dbReference type="HAMAP" id="MF_00175">
    <property type="entry name" value="ClpX"/>
    <property type="match status" value="1"/>
</dbReference>
<dbReference type="InterPro" id="IPR003593">
    <property type="entry name" value="AAA+_ATPase"/>
</dbReference>
<dbReference type="InterPro" id="IPR050052">
    <property type="entry name" value="ATP-dep_Clp_protease_ClpX"/>
</dbReference>
<dbReference type="InterPro" id="IPR003959">
    <property type="entry name" value="ATPase_AAA_core"/>
</dbReference>
<dbReference type="InterPro" id="IPR019489">
    <property type="entry name" value="Clp_ATPase_C"/>
</dbReference>
<dbReference type="InterPro" id="IPR004487">
    <property type="entry name" value="Clp_protease_ATP-bd_su_ClpX"/>
</dbReference>
<dbReference type="InterPro" id="IPR046425">
    <property type="entry name" value="ClpX_bact"/>
</dbReference>
<dbReference type="InterPro" id="IPR027417">
    <property type="entry name" value="P-loop_NTPase"/>
</dbReference>
<dbReference type="InterPro" id="IPR010603">
    <property type="entry name" value="Znf_CppX_C4"/>
</dbReference>
<dbReference type="InterPro" id="IPR038366">
    <property type="entry name" value="Znf_CppX_C4_sf"/>
</dbReference>
<dbReference type="NCBIfam" id="TIGR00382">
    <property type="entry name" value="clpX"/>
    <property type="match status" value="1"/>
</dbReference>
<dbReference type="NCBIfam" id="NF003745">
    <property type="entry name" value="PRK05342.1"/>
    <property type="match status" value="1"/>
</dbReference>
<dbReference type="PANTHER" id="PTHR48102:SF7">
    <property type="entry name" value="ATP-DEPENDENT CLP PROTEASE ATP-BINDING SUBUNIT CLPX-LIKE, MITOCHONDRIAL"/>
    <property type="match status" value="1"/>
</dbReference>
<dbReference type="PANTHER" id="PTHR48102">
    <property type="entry name" value="ATP-DEPENDENT CLP PROTEASE ATP-BINDING SUBUNIT CLPX-LIKE, MITOCHONDRIAL-RELATED"/>
    <property type="match status" value="1"/>
</dbReference>
<dbReference type="Pfam" id="PF07724">
    <property type="entry name" value="AAA_2"/>
    <property type="match status" value="1"/>
</dbReference>
<dbReference type="Pfam" id="PF10431">
    <property type="entry name" value="ClpB_D2-small"/>
    <property type="match status" value="1"/>
</dbReference>
<dbReference type="Pfam" id="PF06689">
    <property type="entry name" value="zf-C4_ClpX"/>
    <property type="match status" value="1"/>
</dbReference>
<dbReference type="SMART" id="SM00382">
    <property type="entry name" value="AAA"/>
    <property type="match status" value="1"/>
</dbReference>
<dbReference type="SMART" id="SM01086">
    <property type="entry name" value="ClpB_D2-small"/>
    <property type="match status" value="1"/>
</dbReference>
<dbReference type="SMART" id="SM00994">
    <property type="entry name" value="zf-C4_ClpX"/>
    <property type="match status" value="1"/>
</dbReference>
<dbReference type="SUPFAM" id="SSF57716">
    <property type="entry name" value="Glucocorticoid receptor-like (DNA-binding domain)"/>
    <property type="match status" value="1"/>
</dbReference>
<dbReference type="SUPFAM" id="SSF52540">
    <property type="entry name" value="P-loop containing nucleoside triphosphate hydrolases"/>
    <property type="match status" value="1"/>
</dbReference>
<dbReference type="PROSITE" id="PS51902">
    <property type="entry name" value="CLPX_ZB"/>
    <property type="match status" value="1"/>
</dbReference>
<comment type="function">
    <text evidence="1">ATP-dependent specificity component of the Clp protease. It directs the protease to specific substrates. Can perform chaperone functions in the absence of ClpP.</text>
</comment>
<comment type="subunit">
    <text evidence="1">Component of the ClpX-ClpP complex. Forms a hexameric ring that, in the presence of ATP, binds to fourteen ClpP subunits assembled into a disk-like structure with a central cavity, resembling the structure of eukaryotic proteasomes.</text>
</comment>
<comment type="similarity">
    <text evidence="1">Belongs to the ClpX chaperone family.</text>
</comment>
<accession>Q817Q2</accession>
<gene>
    <name evidence="1" type="primary">clpX</name>
    <name type="ordered locus">BC_4479</name>
</gene>
<name>CLPX_BACCR</name>
<reference key="1">
    <citation type="journal article" date="2003" name="Nature">
        <title>Genome sequence of Bacillus cereus and comparative analysis with Bacillus anthracis.</title>
        <authorList>
            <person name="Ivanova N."/>
            <person name="Sorokin A."/>
            <person name="Anderson I."/>
            <person name="Galleron N."/>
            <person name="Candelon B."/>
            <person name="Kapatral V."/>
            <person name="Bhattacharyya A."/>
            <person name="Reznik G."/>
            <person name="Mikhailova N."/>
            <person name="Lapidus A."/>
            <person name="Chu L."/>
            <person name="Mazur M."/>
            <person name="Goltsman E."/>
            <person name="Larsen N."/>
            <person name="D'Souza M."/>
            <person name="Walunas T."/>
            <person name="Grechkin Y."/>
            <person name="Pusch G."/>
            <person name="Haselkorn R."/>
            <person name="Fonstein M."/>
            <person name="Ehrlich S.D."/>
            <person name="Overbeek R."/>
            <person name="Kyrpides N.C."/>
        </authorList>
    </citation>
    <scope>NUCLEOTIDE SEQUENCE [LARGE SCALE GENOMIC DNA]</scope>
    <source>
        <strain>ATCC 14579 / DSM 31 / CCUG 7414 / JCM 2152 / NBRC 15305 / NCIMB 9373 / NCTC 2599 / NRRL B-3711</strain>
    </source>
</reference>
<keyword id="KW-0067">ATP-binding</keyword>
<keyword id="KW-0143">Chaperone</keyword>
<keyword id="KW-0479">Metal-binding</keyword>
<keyword id="KW-0547">Nucleotide-binding</keyword>
<keyword id="KW-1185">Reference proteome</keyword>
<keyword id="KW-0862">Zinc</keyword>
<protein>
    <recommendedName>
        <fullName evidence="1">ATP-dependent Clp protease ATP-binding subunit ClpX</fullName>
    </recommendedName>
</protein>
<evidence type="ECO:0000255" key="1">
    <source>
        <dbReference type="HAMAP-Rule" id="MF_00175"/>
    </source>
</evidence>
<evidence type="ECO:0000255" key="2">
    <source>
        <dbReference type="PROSITE-ProRule" id="PRU01250"/>
    </source>
</evidence>
<sequence length="419" mass="46242">MFKFNDEKGQLKCSFCGKTQTQVRKLVAGPGVYICDECIELCTEIVQEELAKDEEVEFKDVPKPVEIREILDEYVIGQDSAKKALAVAVYNHYKRINSNSKIDDVELAKSNIALIGPTGSGKTLLAQTLARILNVPFAIADATSLTEAGYVGEDVENILLKLIQAADYDVEKAEKGIIYIDEIDKVARKSENPSITRDVSGEGVQQALLKILEGTVASVPPQGGRKHPHQEFIQIDTTNILFICGGAFDGIEPIIKRRLGEKVIGFGSEKKNADVNEKHVLSHVLPEDLLRFGLIPEFIGRLPVIANLEPLDEDALVDILTKPKNALVKQFQKLLELDDVELEFEEGALIEIAKKAIERKTGARGLRSIIEGLMLDVMFELPSRKDIEKCILTKETVADNEPPKLVLQDGTVLDTKTSA</sequence>
<organism>
    <name type="scientific">Bacillus cereus (strain ATCC 14579 / DSM 31 / CCUG 7414 / JCM 2152 / NBRC 15305 / NCIMB 9373 / NCTC 2599 / NRRL B-3711)</name>
    <dbReference type="NCBI Taxonomy" id="226900"/>
    <lineage>
        <taxon>Bacteria</taxon>
        <taxon>Bacillati</taxon>
        <taxon>Bacillota</taxon>
        <taxon>Bacilli</taxon>
        <taxon>Bacillales</taxon>
        <taxon>Bacillaceae</taxon>
        <taxon>Bacillus</taxon>
        <taxon>Bacillus cereus group</taxon>
    </lineage>
</organism>
<proteinExistence type="inferred from homology"/>